<feature type="chain" id="PRO_1000023306" description="Thymidylate kinase">
    <location>
        <begin position="1"/>
        <end position="197"/>
    </location>
</feature>
<feature type="binding site" evidence="1">
    <location>
        <begin position="7"/>
        <end position="14"/>
    </location>
    <ligand>
        <name>ATP</name>
        <dbReference type="ChEBI" id="CHEBI:30616"/>
    </ligand>
</feature>
<organism>
    <name type="scientific">Thermotoga petrophila (strain ATCC BAA-488 / DSM 13995 / JCM 10881 / RKU-1)</name>
    <dbReference type="NCBI Taxonomy" id="390874"/>
    <lineage>
        <taxon>Bacteria</taxon>
        <taxon>Thermotogati</taxon>
        <taxon>Thermotogota</taxon>
        <taxon>Thermotogae</taxon>
        <taxon>Thermotogales</taxon>
        <taxon>Thermotogaceae</taxon>
        <taxon>Thermotoga</taxon>
    </lineage>
</organism>
<comment type="function">
    <text evidence="1">Phosphorylation of dTMP to form dTDP in both de novo and salvage pathways of dTTP synthesis.</text>
</comment>
<comment type="catalytic activity">
    <reaction evidence="1">
        <text>dTMP + ATP = dTDP + ADP</text>
        <dbReference type="Rhea" id="RHEA:13517"/>
        <dbReference type="ChEBI" id="CHEBI:30616"/>
        <dbReference type="ChEBI" id="CHEBI:58369"/>
        <dbReference type="ChEBI" id="CHEBI:63528"/>
        <dbReference type="ChEBI" id="CHEBI:456216"/>
        <dbReference type="EC" id="2.7.4.9"/>
    </reaction>
</comment>
<comment type="similarity">
    <text evidence="1">Belongs to the thymidylate kinase family.</text>
</comment>
<sequence length="197" mass="22997">MFITFEGIDGSGKSTQIKLLARYLEKRGKRVILKREPGGTETGEKIRKLLLKEEMTPKAELFLFLASRNLLVMEIKRYLSEGYVVLLDRYTDSSVAYQGFGRNLGKEIVEKLNDFATDSLVPDLTFYIDVDVETALNRKGELNRFEKREFLERVREGYLVLAKEHPERIVVLDGKRSIEEIHRDVVREVERRWKLDV</sequence>
<proteinExistence type="inferred from homology"/>
<evidence type="ECO:0000255" key="1">
    <source>
        <dbReference type="HAMAP-Rule" id="MF_00165"/>
    </source>
</evidence>
<protein>
    <recommendedName>
        <fullName evidence="1">Thymidylate kinase</fullName>
        <ecNumber evidence="1">2.7.4.9</ecNumber>
    </recommendedName>
    <alternativeName>
        <fullName evidence="1">dTMP kinase</fullName>
    </alternativeName>
</protein>
<accession>A5IN77</accession>
<dbReference type="EC" id="2.7.4.9" evidence="1"/>
<dbReference type="EMBL" id="CP000702">
    <property type="protein sequence ID" value="ABQ47650.1"/>
    <property type="molecule type" value="Genomic_DNA"/>
</dbReference>
<dbReference type="RefSeq" id="WP_011944059.1">
    <property type="nucleotide sequence ID" value="NC_009486.1"/>
</dbReference>
<dbReference type="SMR" id="A5IN77"/>
<dbReference type="STRING" id="390874.Tpet_1644"/>
<dbReference type="KEGG" id="tpt:Tpet_1644"/>
<dbReference type="eggNOG" id="COG0125">
    <property type="taxonomic scope" value="Bacteria"/>
</dbReference>
<dbReference type="HOGENOM" id="CLU_049131_0_2_0"/>
<dbReference type="Proteomes" id="UP000006558">
    <property type="component" value="Chromosome"/>
</dbReference>
<dbReference type="GO" id="GO:0005829">
    <property type="term" value="C:cytosol"/>
    <property type="evidence" value="ECO:0007669"/>
    <property type="project" value="TreeGrafter"/>
</dbReference>
<dbReference type="GO" id="GO:0005524">
    <property type="term" value="F:ATP binding"/>
    <property type="evidence" value="ECO:0007669"/>
    <property type="project" value="UniProtKB-UniRule"/>
</dbReference>
<dbReference type="GO" id="GO:0004798">
    <property type="term" value="F:dTMP kinase activity"/>
    <property type="evidence" value="ECO:0007669"/>
    <property type="project" value="UniProtKB-UniRule"/>
</dbReference>
<dbReference type="GO" id="GO:0006233">
    <property type="term" value="P:dTDP biosynthetic process"/>
    <property type="evidence" value="ECO:0007669"/>
    <property type="project" value="InterPro"/>
</dbReference>
<dbReference type="GO" id="GO:0006235">
    <property type="term" value="P:dTTP biosynthetic process"/>
    <property type="evidence" value="ECO:0007669"/>
    <property type="project" value="UniProtKB-UniRule"/>
</dbReference>
<dbReference type="GO" id="GO:0006227">
    <property type="term" value="P:dUDP biosynthetic process"/>
    <property type="evidence" value="ECO:0007669"/>
    <property type="project" value="TreeGrafter"/>
</dbReference>
<dbReference type="CDD" id="cd01672">
    <property type="entry name" value="TMPK"/>
    <property type="match status" value="1"/>
</dbReference>
<dbReference type="FunFam" id="3.40.50.300:FF:000225">
    <property type="entry name" value="Thymidylate kinase"/>
    <property type="match status" value="1"/>
</dbReference>
<dbReference type="Gene3D" id="3.40.50.300">
    <property type="entry name" value="P-loop containing nucleotide triphosphate hydrolases"/>
    <property type="match status" value="1"/>
</dbReference>
<dbReference type="HAMAP" id="MF_00165">
    <property type="entry name" value="Thymidylate_kinase"/>
    <property type="match status" value="1"/>
</dbReference>
<dbReference type="InterPro" id="IPR027417">
    <property type="entry name" value="P-loop_NTPase"/>
</dbReference>
<dbReference type="InterPro" id="IPR039430">
    <property type="entry name" value="Thymidylate_kin-like_dom"/>
</dbReference>
<dbReference type="InterPro" id="IPR018095">
    <property type="entry name" value="Thymidylate_kin_CS"/>
</dbReference>
<dbReference type="InterPro" id="IPR018094">
    <property type="entry name" value="Thymidylate_kinase"/>
</dbReference>
<dbReference type="NCBIfam" id="TIGR00041">
    <property type="entry name" value="DTMP_kinase"/>
    <property type="match status" value="1"/>
</dbReference>
<dbReference type="PANTHER" id="PTHR10344">
    <property type="entry name" value="THYMIDYLATE KINASE"/>
    <property type="match status" value="1"/>
</dbReference>
<dbReference type="PANTHER" id="PTHR10344:SF4">
    <property type="entry name" value="UMP-CMP KINASE 2, MITOCHONDRIAL"/>
    <property type="match status" value="1"/>
</dbReference>
<dbReference type="Pfam" id="PF02223">
    <property type="entry name" value="Thymidylate_kin"/>
    <property type="match status" value="1"/>
</dbReference>
<dbReference type="SUPFAM" id="SSF52540">
    <property type="entry name" value="P-loop containing nucleoside triphosphate hydrolases"/>
    <property type="match status" value="1"/>
</dbReference>
<dbReference type="PROSITE" id="PS01331">
    <property type="entry name" value="THYMIDYLATE_KINASE"/>
    <property type="match status" value="1"/>
</dbReference>
<name>KTHY_THEP1</name>
<keyword id="KW-0067">ATP-binding</keyword>
<keyword id="KW-0418">Kinase</keyword>
<keyword id="KW-0545">Nucleotide biosynthesis</keyword>
<keyword id="KW-0547">Nucleotide-binding</keyword>
<keyword id="KW-0808">Transferase</keyword>
<gene>
    <name evidence="1" type="primary">tmk</name>
    <name type="ordered locus">Tpet_1644</name>
</gene>
<reference key="1">
    <citation type="submission" date="2007-05" db="EMBL/GenBank/DDBJ databases">
        <title>Complete sequence of Thermotoga petrophila RKU-1.</title>
        <authorList>
            <consortium name="US DOE Joint Genome Institute"/>
            <person name="Copeland A."/>
            <person name="Lucas S."/>
            <person name="Lapidus A."/>
            <person name="Barry K."/>
            <person name="Glavina del Rio T."/>
            <person name="Dalin E."/>
            <person name="Tice H."/>
            <person name="Pitluck S."/>
            <person name="Sims D."/>
            <person name="Brettin T."/>
            <person name="Bruce D."/>
            <person name="Detter J.C."/>
            <person name="Han C."/>
            <person name="Tapia R."/>
            <person name="Schmutz J."/>
            <person name="Larimer F."/>
            <person name="Land M."/>
            <person name="Hauser L."/>
            <person name="Kyrpides N."/>
            <person name="Mikhailova N."/>
            <person name="Nelson K."/>
            <person name="Gogarten J.P."/>
            <person name="Noll K."/>
            <person name="Richardson P."/>
        </authorList>
    </citation>
    <scope>NUCLEOTIDE SEQUENCE [LARGE SCALE GENOMIC DNA]</scope>
    <source>
        <strain>ATCC BAA-488 / DSM 13995 / JCM 10881 / RKU-1</strain>
    </source>
</reference>